<organism>
    <name type="scientific">Bothrops insularis</name>
    <name type="common">Golden lancehead</name>
    <name type="synonym">Lachesis insularis</name>
    <dbReference type="NCBI Taxonomy" id="8723"/>
    <lineage>
        <taxon>Eukaryota</taxon>
        <taxon>Metazoa</taxon>
        <taxon>Chordata</taxon>
        <taxon>Craniata</taxon>
        <taxon>Vertebrata</taxon>
        <taxon>Euteleostomi</taxon>
        <taxon>Lepidosauria</taxon>
        <taxon>Squamata</taxon>
        <taxon>Bifurcata</taxon>
        <taxon>Unidentata</taxon>
        <taxon>Episquamata</taxon>
        <taxon>Toxicofera</taxon>
        <taxon>Serpentes</taxon>
        <taxon>Colubroidea</taxon>
        <taxon>Viperidae</taxon>
        <taxon>Crotalinae</taxon>
        <taxon>Bothrops</taxon>
    </lineage>
</organism>
<evidence type="ECO:0000255" key="1">
    <source>
        <dbReference type="PROSITE-ProRule" id="PRU00448"/>
    </source>
</evidence>
<evidence type="ECO:0000269" key="2">
    <source>
    </source>
</evidence>
<evidence type="ECO:0000305" key="3"/>
<comment type="function">
    <text evidence="2">May be involved in the cellular control mechanism of the secretion of toxins from the gland into the venom.</text>
</comment>
<comment type="subcellular location">
    <subcellularLocation>
        <location evidence="3">Cytoplasm</location>
    </subcellularLocation>
    <text>Not found in venom.</text>
</comment>
<comment type="tissue specificity">
    <text evidence="2">Expressed by the venom gland.</text>
</comment>
<comment type="similarity">
    <text evidence="3">Belongs to the calmodulin family. Calglandulin subfamily.</text>
</comment>
<accession>Q8AY75</accession>
<proteinExistence type="evidence at transcript level"/>
<feature type="chain" id="PRO_0000073549" description="Calglandulin">
    <location>
        <begin position="1"/>
        <end position="156"/>
    </location>
</feature>
<feature type="domain" description="EF-hand 1" evidence="1">
    <location>
        <begin position="8"/>
        <end position="43"/>
    </location>
</feature>
<feature type="domain" description="EF-hand 2" evidence="1">
    <location>
        <begin position="44"/>
        <end position="79"/>
    </location>
</feature>
<feature type="domain" description="EF-hand 3" evidence="1">
    <location>
        <begin position="82"/>
        <end position="117"/>
    </location>
</feature>
<feature type="domain" description="EF-hand 4" evidence="1">
    <location>
        <begin position="118"/>
        <end position="153"/>
    </location>
</feature>
<feature type="binding site" evidence="1">
    <location>
        <position position="131"/>
    </location>
    <ligand>
        <name>Ca(2+)</name>
        <dbReference type="ChEBI" id="CHEBI:29108"/>
    </ligand>
</feature>
<feature type="binding site" evidence="1">
    <location>
        <position position="133"/>
    </location>
    <ligand>
        <name>Ca(2+)</name>
        <dbReference type="ChEBI" id="CHEBI:29108"/>
    </ligand>
</feature>
<feature type="binding site" evidence="1">
    <location>
        <position position="135"/>
    </location>
    <ligand>
        <name>Ca(2+)</name>
        <dbReference type="ChEBI" id="CHEBI:29108"/>
    </ligand>
</feature>
<feature type="binding site" evidence="1">
    <location>
        <position position="137"/>
    </location>
    <ligand>
        <name>Ca(2+)</name>
        <dbReference type="ChEBI" id="CHEBI:29108"/>
    </ligand>
</feature>
<feature type="binding site" evidence="1">
    <location>
        <position position="142"/>
    </location>
    <ligand>
        <name>Ca(2+)</name>
        <dbReference type="ChEBI" id="CHEBI:29108"/>
    </ligand>
</feature>
<dbReference type="EMBL" id="AF545856">
    <property type="protein sequence ID" value="AAN37910.1"/>
    <property type="molecule type" value="mRNA"/>
</dbReference>
<dbReference type="SMR" id="Q8AY75"/>
<dbReference type="GO" id="GO:0005737">
    <property type="term" value="C:cytoplasm"/>
    <property type="evidence" value="ECO:0007669"/>
    <property type="project" value="UniProtKB-SubCell"/>
</dbReference>
<dbReference type="GO" id="GO:0016460">
    <property type="term" value="C:myosin II complex"/>
    <property type="evidence" value="ECO:0007669"/>
    <property type="project" value="TreeGrafter"/>
</dbReference>
<dbReference type="GO" id="GO:0005509">
    <property type="term" value="F:calcium ion binding"/>
    <property type="evidence" value="ECO:0007669"/>
    <property type="project" value="InterPro"/>
</dbReference>
<dbReference type="CDD" id="cd00051">
    <property type="entry name" value="EFh"/>
    <property type="match status" value="1"/>
</dbReference>
<dbReference type="FunFam" id="1.10.238.10:FF:000163">
    <property type="entry name" value="Calmodulin like 6"/>
    <property type="match status" value="1"/>
</dbReference>
<dbReference type="Gene3D" id="1.10.238.10">
    <property type="entry name" value="EF-hand"/>
    <property type="match status" value="2"/>
</dbReference>
<dbReference type="InterPro" id="IPR050230">
    <property type="entry name" value="CALM/Myosin/TropC-like"/>
</dbReference>
<dbReference type="InterPro" id="IPR011992">
    <property type="entry name" value="EF-hand-dom_pair"/>
</dbReference>
<dbReference type="InterPro" id="IPR018247">
    <property type="entry name" value="EF_Hand_1_Ca_BS"/>
</dbReference>
<dbReference type="InterPro" id="IPR002048">
    <property type="entry name" value="EF_hand_dom"/>
</dbReference>
<dbReference type="PANTHER" id="PTHR23048:SF56">
    <property type="entry name" value="CALMODULIN 2"/>
    <property type="match status" value="1"/>
</dbReference>
<dbReference type="PANTHER" id="PTHR23048">
    <property type="entry name" value="MYOSIN LIGHT CHAIN 1, 3"/>
    <property type="match status" value="1"/>
</dbReference>
<dbReference type="Pfam" id="PF13499">
    <property type="entry name" value="EF-hand_7"/>
    <property type="match status" value="2"/>
</dbReference>
<dbReference type="SMART" id="SM00054">
    <property type="entry name" value="EFh"/>
    <property type="match status" value="4"/>
</dbReference>
<dbReference type="SUPFAM" id="SSF47473">
    <property type="entry name" value="EF-hand"/>
    <property type="match status" value="1"/>
</dbReference>
<dbReference type="PROSITE" id="PS00018">
    <property type="entry name" value="EF_HAND_1"/>
    <property type="match status" value="1"/>
</dbReference>
<dbReference type="PROSITE" id="PS50222">
    <property type="entry name" value="EF_HAND_2"/>
    <property type="match status" value="4"/>
</dbReference>
<protein>
    <recommendedName>
        <fullName>Calglandulin</fullName>
    </recommendedName>
</protein>
<sequence>MAATLTPEQITEYKGIFEMFDEEGNGLVKTDDLESLMSLVGINPTKRDLANMAKDVDKDKKGTFNCDGFLALMGIYHEKSKNQDEELRAAFKVFDKEHKGYIEWDTLKYVLMNAGEPLNEQEAELMMKEADKDGDGTIDYEEFVAMMTGESFKLTQ</sequence>
<reference key="1">
    <citation type="journal article" date="2003" name="Biochim. Biophys. Acta">
        <title>Cloning and expression of calglandulin, a new EF-hand protein from the venom glands of Bothrops insularis snake in E. coli.</title>
        <authorList>
            <person name="Junqueira-de-Azevedo I.L.M."/>
            <person name="Pertinhez T."/>
            <person name="Spisni A."/>
            <person name="Carreno F.R."/>
            <person name="Farah C.S."/>
            <person name="Ho P.L."/>
        </authorList>
    </citation>
    <scope>NUCLEOTIDE SEQUENCE [MRNA]</scope>
    <scope>FUNCTION</scope>
    <scope>TISSUE SPECIFICITY</scope>
    <source>
        <tissue>Venom gland</tissue>
    </source>
</reference>
<keyword id="KW-0106">Calcium</keyword>
<keyword id="KW-0963">Cytoplasm</keyword>
<keyword id="KW-0479">Metal-binding</keyword>
<keyword id="KW-0677">Repeat</keyword>
<name>CALGL_BOTIN</name>